<evidence type="ECO:0000255" key="1">
    <source>
        <dbReference type="HAMAP-Rule" id="MF_01454"/>
    </source>
</evidence>
<evidence type="ECO:0000255" key="2">
    <source>
        <dbReference type="PROSITE-ProRule" id="PRU01229"/>
    </source>
</evidence>
<evidence type="ECO:0000255" key="3">
    <source>
        <dbReference type="PROSITE-ProRule" id="PRU01231"/>
    </source>
</evidence>
<sequence length="424" mass="47272">MFIDTAKIFVKSGKGGDGSISFRREKYIAFGGPDGGDGGKGGNVVLVVDPNMTTLLDFTYKRKYKAEPGGNGAGSKCFGKNGKDLHIKVPMGTIVKDVETDKIMADLSKPEDSYVVAKGGRGGKGNCRFTTPTRQAPDFAEPGMPEEERWIKLELKLLADVGLIGFPNVGKSTLLSVVSKARPKIANYHFTTLKPNLGVVSIEGVNNFVIADIPGIIEGASEGVGLGLDFLRHVERTRVLIHVIDISSVEGRDPYDDFLKINEELKRYSVKLYDRPQIIAANKSDMLFDEEKFEEFKTKVEKHGYNKVFKISAATKQGVDDLMKEAARLLSTIPVTDLEISEEDRFIEEEKRFTYSIRKEDNTYIVEGSFVDRLLNAVNVNDPDDLRYFHKVLKNKGVMEELMEMGIEDGDIVRLNDFEFDFLL</sequence>
<keyword id="KW-0963">Cytoplasm</keyword>
<keyword id="KW-0342">GTP-binding</keyword>
<keyword id="KW-0378">Hydrolase</keyword>
<keyword id="KW-0460">Magnesium</keyword>
<keyword id="KW-0479">Metal-binding</keyword>
<keyword id="KW-0547">Nucleotide-binding</keyword>
<protein>
    <recommendedName>
        <fullName evidence="1">GTPase Obg</fullName>
        <ecNumber evidence="1">3.6.5.-</ecNumber>
    </recommendedName>
    <alternativeName>
        <fullName evidence="1">GTP-binding protein Obg</fullName>
    </alternativeName>
</protein>
<reference key="1">
    <citation type="journal article" date="2007" name="PLoS ONE">
        <title>Analysis of the neurotoxin complex genes in Clostridium botulinum A1-A4 and B1 strains: BoNT/A3, /Ba4 and /B1 clusters are located within plasmids.</title>
        <authorList>
            <person name="Smith T.J."/>
            <person name="Hill K.K."/>
            <person name="Foley B.T."/>
            <person name="Detter J.C."/>
            <person name="Munk A.C."/>
            <person name="Bruce D.C."/>
            <person name="Doggett N.A."/>
            <person name="Smith L.A."/>
            <person name="Marks J.D."/>
            <person name="Xie G."/>
            <person name="Brettin T.S."/>
        </authorList>
    </citation>
    <scope>NUCLEOTIDE SEQUENCE [LARGE SCALE GENOMIC DNA]</scope>
    <source>
        <strain>Okra / Type B1</strain>
    </source>
</reference>
<organism>
    <name type="scientific">Clostridium botulinum (strain Okra / Type B1)</name>
    <dbReference type="NCBI Taxonomy" id="498213"/>
    <lineage>
        <taxon>Bacteria</taxon>
        <taxon>Bacillati</taxon>
        <taxon>Bacillota</taxon>
        <taxon>Clostridia</taxon>
        <taxon>Eubacteriales</taxon>
        <taxon>Clostridiaceae</taxon>
        <taxon>Clostridium</taxon>
    </lineage>
</organism>
<accession>B1ILY5</accession>
<feature type="chain" id="PRO_0000385845" description="GTPase Obg">
    <location>
        <begin position="1"/>
        <end position="424"/>
    </location>
</feature>
<feature type="domain" description="Obg" evidence="3">
    <location>
        <begin position="1"/>
        <end position="158"/>
    </location>
</feature>
<feature type="domain" description="OBG-type G" evidence="1">
    <location>
        <begin position="159"/>
        <end position="331"/>
    </location>
</feature>
<feature type="domain" description="OCT" evidence="2">
    <location>
        <begin position="345"/>
        <end position="424"/>
    </location>
</feature>
<feature type="binding site" evidence="1">
    <location>
        <begin position="165"/>
        <end position="172"/>
    </location>
    <ligand>
        <name>GTP</name>
        <dbReference type="ChEBI" id="CHEBI:37565"/>
    </ligand>
</feature>
<feature type="binding site" evidence="1">
    <location>
        <position position="172"/>
    </location>
    <ligand>
        <name>Mg(2+)</name>
        <dbReference type="ChEBI" id="CHEBI:18420"/>
    </ligand>
</feature>
<feature type="binding site" evidence="1">
    <location>
        <begin position="190"/>
        <end position="194"/>
    </location>
    <ligand>
        <name>GTP</name>
        <dbReference type="ChEBI" id="CHEBI:37565"/>
    </ligand>
</feature>
<feature type="binding site" evidence="1">
    <location>
        <position position="192"/>
    </location>
    <ligand>
        <name>Mg(2+)</name>
        <dbReference type="ChEBI" id="CHEBI:18420"/>
    </ligand>
</feature>
<feature type="binding site" evidence="1">
    <location>
        <begin position="212"/>
        <end position="215"/>
    </location>
    <ligand>
        <name>GTP</name>
        <dbReference type="ChEBI" id="CHEBI:37565"/>
    </ligand>
</feature>
<feature type="binding site" evidence="1">
    <location>
        <begin position="282"/>
        <end position="285"/>
    </location>
    <ligand>
        <name>GTP</name>
        <dbReference type="ChEBI" id="CHEBI:37565"/>
    </ligand>
</feature>
<feature type="binding site" evidence="1">
    <location>
        <begin position="312"/>
        <end position="314"/>
    </location>
    <ligand>
        <name>GTP</name>
        <dbReference type="ChEBI" id="CHEBI:37565"/>
    </ligand>
</feature>
<name>OBG_CLOBK</name>
<proteinExistence type="inferred from homology"/>
<dbReference type="EC" id="3.6.5.-" evidence="1"/>
<dbReference type="EMBL" id="CP000939">
    <property type="protein sequence ID" value="ACA43975.1"/>
    <property type="molecule type" value="Genomic_DNA"/>
</dbReference>
<dbReference type="RefSeq" id="WP_003400774.1">
    <property type="nucleotide sequence ID" value="NC_010516.1"/>
</dbReference>
<dbReference type="SMR" id="B1ILY5"/>
<dbReference type="KEGG" id="cbb:CLD_1558"/>
<dbReference type="HOGENOM" id="CLU_011747_2_1_9"/>
<dbReference type="Proteomes" id="UP000008541">
    <property type="component" value="Chromosome"/>
</dbReference>
<dbReference type="GO" id="GO:0005737">
    <property type="term" value="C:cytoplasm"/>
    <property type="evidence" value="ECO:0007669"/>
    <property type="project" value="UniProtKB-SubCell"/>
</dbReference>
<dbReference type="GO" id="GO:0005525">
    <property type="term" value="F:GTP binding"/>
    <property type="evidence" value="ECO:0007669"/>
    <property type="project" value="UniProtKB-UniRule"/>
</dbReference>
<dbReference type="GO" id="GO:0003924">
    <property type="term" value="F:GTPase activity"/>
    <property type="evidence" value="ECO:0007669"/>
    <property type="project" value="UniProtKB-UniRule"/>
</dbReference>
<dbReference type="GO" id="GO:0000287">
    <property type="term" value="F:magnesium ion binding"/>
    <property type="evidence" value="ECO:0007669"/>
    <property type="project" value="InterPro"/>
</dbReference>
<dbReference type="GO" id="GO:0042254">
    <property type="term" value="P:ribosome biogenesis"/>
    <property type="evidence" value="ECO:0007669"/>
    <property type="project" value="UniProtKB-UniRule"/>
</dbReference>
<dbReference type="CDD" id="cd01898">
    <property type="entry name" value="Obg"/>
    <property type="match status" value="1"/>
</dbReference>
<dbReference type="FunFam" id="2.70.210.12:FF:000001">
    <property type="entry name" value="GTPase Obg"/>
    <property type="match status" value="1"/>
</dbReference>
<dbReference type="Gene3D" id="3.30.300.350">
    <property type="entry name" value="GTP-binding protein OBG, C-terminal domain"/>
    <property type="match status" value="1"/>
</dbReference>
<dbReference type="Gene3D" id="2.70.210.12">
    <property type="entry name" value="GTP1/OBG domain"/>
    <property type="match status" value="1"/>
</dbReference>
<dbReference type="Gene3D" id="3.40.50.300">
    <property type="entry name" value="P-loop containing nucleotide triphosphate hydrolases"/>
    <property type="match status" value="1"/>
</dbReference>
<dbReference type="HAMAP" id="MF_01454">
    <property type="entry name" value="GTPase_Obg"/>
    <property type="match status" value="1"/>
</dbReference>
<dbReference type="InterPro" id="IPR031167">
    <property type="entry name" value="G_OBG"/>
</dbReference>
<dbReference type="InterPro" id="IPR006073">
    <property type="entry name" value="GTP-bd"/>
</dbReference>
<dbReference type="InterPro" id="IPR014100">
    <property type="entry name" value="GTP-bd_Obg/CgtA"/>
</dbReference>
<dbReference type="InterPro" id="IPR036346">
    <property type="entry name" value="GTP-bd_prot_GTP1/OBG_C_sf"/>
</dbReference>
<dbReference type="InterPro" id="IPR006074">
    <property type="entry name" value="GTP1-OBG_CS"/>
</dbReference>
<dbReference type="InterPro" id="IPR006169">
    <property type="entry name" value="GTP1_OBG_dom"/>
</dbReference>
<dbReference type="InterPro" id="IPR036726">
    <property type="entry name" value="GTP1_OBG_dom_sf"/>
</dbReference>
<dbReference type="InterPro" id="IPR045086">
    <property type="entry name" value="OBG_GTPase"/>
</dbReference>
<dbReference type="InterPro" id="IPR015349">
    <property type="entry name" value="OCT_dom"/>
</dbReference>
<dbReference type="InterPro" id="IPR027417">
    <property type="entry name" value="P-loop_NTPase"/>
</dbReference>
<dbReference type="InterPro" id="IPR005225">
    <property type="entry name" value="Small_GTP-bd"/>
</dbReference>
<dbReference type="NCBIfam" id="TIGR02729">
    <property type="entry name" value="Obg_CgtA"/>
    <property type="match status" value="1"/>
</dbReference>
<dbReference type="NCBIfam" id="TIGR03595">
    <property type="entry name" value="Obg_CgtA_exten"/>
    <property type="match status" value="1"/>
</dbReference>
<dbReference type="NCBIfam" id="NF008954">
    <property type="entry name" value="PRK12296.1"/>
    <property type="match status" value="1"/>
</dbReference>
<dbReference type="NCBIfam" id="NF008955">
    <property type="entry name" value="PRK12297.1"/>
    <property type="match status" value="1"/>
</dbReference>
<dbReference type="NCBIfam" id="NF008956">
    <property type="entry name" value="PRK12299.1"/>
    <property type="match status" value="1"/>
</dbReference>
<dbReference type="NCBIfam" id="TIGR00231">
    <property type="entry name" value="small_GTP"/>
    <property type="match status" value="1"/>
</dbReference>
<dbReference type="PANTHER" id="PTHR11702">
    <property type="entry name" value="DEVELOPMENTALLY REGULATED GTP-BINDING PROTEIN-RELATED"/>
    <property type="match status" value="1"/>
</dbReference>
<dbReference type="PANTHER" id="PTHR11702:SF31">
    <property type="entry name" value="MITOCHONDRIAL RIBOSOME-ASSOCIATED GTPASE 2"/>
    <property type="match status" value="1"/>
</dbReference>
<dbReference type="Pfam" id="PF09269">
    <property type="entry name" value="DUF1967"/>
    <property type="match status" value="1"/>
</dbReference>
<dbReference type="Pfam" id="PF01018">
    <property type="entry name" value="GTP1_OBG"/>
    <property type="match status" value="1"/>
</dbReference>
<dbReference type="Pfam" id="PF01926">
    <property type="entry name" value="MMR_HSR1"/>
    <property type="match status" value="1"/>
</dbReference>
<dbReference type="PIRSF" id="PIRSF002401">
    <property type="entry name" value="GTP_bd_Obg/CgtA"/>
    <property type="match status" value="1"/>
</dbReference>
<dbReference type="PRINTS" id="PR00326">
    <property type="entry name" value="GTP1OBG"/>
</dbReference>
<dbReference type="SUPFAM" id="SSF102741">
    <property type="entry name" value="Obg GTP-binding protein C-terminal domain"/>
    <property type="match status" value="1"/>
</dbReference>
<dbReference type="SUPFAM" id="SSF82051">
    <property type="entry name" value="Obg GTP-binding protein N-terminal domain"/>
    <property type="match status" value="1"/>
</dbReference>
<dbReference type="SUPFAM" id="SSF52540">
    <property type="entry name" value="P-loop containing nucleoside triphosphate hydrolases"/>
    <property type="match status" value="1"/>
</dbReference>
<dbReference type="PROSITE" id="PS51710">
    <property type="entry name" value="G_OBG"/>
    <property type="match status" value="1"/>
</dbReference>
<dbReference type="PROSITE" id="PS00905">
    <property type="entry name" value="GTP1_OBG"/>
    <property type="match status" value="1"/>
</dbReference>
<dbReference type="PROSITE" id="PS51883">
    <property type="entry name" value="OBG"/>
    <property type="match status" value="1"/>
</dbReference>
<dbReference type="PROSITE" id="PS51881">
    <property type="entry name" value="OCT"/>
    <property type="match status" value="1"/>
</dbReference>
<gene>
    <name evidence="1" type="primary">obg</name>
    <name type="ordered locus">CLD_1558</name>
</gene>
<comment type="function">
    <text evidence="1">An essential GTPase which binds GTP, GDP and possibly (p)ppGpp with moderate affinity, with high nucleotide exchange rates and a fairly low GTP hydrolysis rate. Plays a role in control of the cell cycle, stress response, ribosome biogenesis and in those bacteria that undergo differentiation, in morphogenesis control.</text>
</comment>
<comment type="cofactor">
    <cofactor evidence="1">
        <name>Mg(2+)</name>
        <dbReference type="ChEBI" id="CHEBI:18420"/>
    </cofactor>
</comment>
<comment type="subunit">
    <text evidence="1">Monomer.</text>
</comment>
<comment type="subcellular location">
    <subcellularLocation>
        <location evidence="1">Cytoplasm</location>
    </subcellularLocation>
</comment>
<comment type="similarity">
    <text evidence="1">Belongs to the TRAFAC class OBG-HflX-like GTPase superfamily. OBG GTPase family.</text>
</comment>